<proteinExistence type="inferred from homology"/>
<feature type="chain" id="PRO_0000061329" description="Cytochrome b">
    <location>
        <begin position="1"/>
        <end position="381"/>
    </location>
</feature>
<feature type="transmembrane region" description="Helical" evidence="2">
    <location>
        <begin position="36"/>
        <end position="56"/>
    </location>
</feature>
<feature type="transmembrane region" description="Helical" evidence="2">
    <location>
        <begin position="80"/>
        <end position="101"/>
    </location>
</feature>
<feature type="transmembrane region" description="Helical" evidence="2">
    <location>
        <begin position="116"/>
        <end position="136"/>
    </location>
</feature>
<feature type="transmembrane region" description="Helical" evidence="2">
    <location>
        <begin position="181"/>
        <end position="201"/>
    </location>
</feature>
<feature type="transmembrane region" description="Helical" evidence="2">
    <location>
        <begin position="229"/>
        <end position="249"/>
    </location>
</feature>
<feature type="transmembrane region" description="Helical" evidence="2">
    <location>
        <begin position="291"/>
        <end position="311"/>
    </location>
</feature>
<feature type="transmembrane region" description="Helical" evidence="2">
    <location>
        <begin position="323"/>
        <end position="343"/>
    </location>
</feature>
<feature type="transmembrane region" description="Helical" evidence="2">
    <location>
        <begin position="350"/>
        <end position="370"/>
    </location>
</feature>
<feature type="binding site" description="axial binding residue" evidence="2">
    <location>
        <position position="86"/>
    </location>
    <ligand>
        <name>heme b</name>
        <dbReference type="ChEBI" id="CHEBI:60344"/>
        <label>b562</label>
    </ligand>
    <ligandPart>
        <name>Fe</name>
        <dbReference type="ChEBI" id="CHEBI:18248"/>
    </ligandPart>
</feature>
<feature type="binding site" description="axial binding residue" evidence="2">
    <location>
        <position position="100"/>
    </location>
    <ligand>
        <name>heme b</name>
        <dbReference type="ChEBI" id="CHEBI:60344"/>
        <label>b566</label>
    </ligand>
    <ligandPart>
        <name>Fe</name>
        <dbReference type="ChEBI" id="CHEBI:18248"/>
    </ligandPart>
</feature>
<feature type="binding site" description="axial binding residue" evidence="2">
    <location>
        <position position="185"/>
    </location>
    <ligand>
        <name>heme b</name>
        <dbReference type="ChEBI" id="CHEBI:60344"/>
        <label>b562</label>
    </ligand>
    <ligandPart>
        <name>Fe</name>
        <dbReference type="ChEBI" id="CHEBI:18248"/>
    </ligandPart>
</feature>
<feature type="binding site" description="axial binding residue" evidence="2">
    <location>
        <position position="199"/>
    </location>
    <ligand>
        <name>heme b</name>
        <dbReference type="ChEBI" id="CHEBI:60344"/>
        <label>b566</label>
    </ligand>
    <ligandPart>
        <name>Fe</name>
        <dbReference type="ChEBI" id="CHEBI:18248"/>
    </ligandPart>
</feature>
<feature type="binding site" evidence="2">
    <location>
        <position position="204"/>
    </location>
    <ligand>
        <name>a ubiquinone</name>
        <dbReference type="ChEBI" id="CHEBI:16389"/>
    </ligand>
</feature>
<protein>
    <recommendedName>
        <fullName>Cytochrome b</fullName>
    </recommendedName>
    <alternativeName>
        <fullName>Complex III subunit 3</fullName>
    </alternativeName>
    <alternativeName>
        <fullName>Complex III subunit III</fullName>
    </alternativeName>
    <alternativeName>
        <fullName>Cytochrome b-c1 complex subunit 3</fullName>
    </alternativeName>
    <alternativeName>
        <fullName>Ubiquinol-cytochrome-c reductase complex cytochrome b subunit</fullName>
    </alternativeName>
</protein>
<accession>Q8WBV2</accession>
<organism>
    <name type="scientific">Ostrinia nubilalis</name>
    <name type="common">European corn borer</name>
    <name type="synonym">Pyralis nubilalis</name>
    <dbReference type="NCBI Taxonomy" id="29057"/>
    <lineage>
        <taxon>Eukaryota</taxon>
        <taxon>Metazoa</taxon>
        <taxon>Ecdysozoa</taxon>
        <taxon>Arthropoda</taxon>
        <taxon>Hexapoda</taxon>
        <taxon>Insecta</taxon>
        <taxon>Pterygota</taxon>
        <taxon>Neoptera</taxon>
        <taxon>Endopterygota</taxon>
        <taxon>Lepidoptera</taxon>
        <taxon>Glossata</taxon>
        <taxon>Ditrysia</taxon>
        <taxon>Pyraloidea</taxon>
        <taxon>Crambidae</taxon>
        <taxon>Pyraustinae</taxon>
        <taxon>Ostrinia</taxon>
    </lineage>
</organism>
<gene>
    <name type="primary">MT-CYB</name>
    <name type="synonym">COB</name>
    <name type="synonym">CYTB</name>
    <name type="synonym">MTCYB</name>
</gene>
<comment type="function">
    <text evidence="2">Component of the ubiquinol-cytochrome c reductase complex (complex III or cytochrome b-c1 complex) that is part of the mitochondrial respiratory chain. The b-c1 complex mediates electron transfer from ubiquinol to cytochrome c. Contributes to the generation of a proton gradient across the mitochondrial membrane that is then used for ATP synthesis.</text>
</comment>
<comment type="cofactor">
    <cofactor evidence="2">
        <name>heme b</name>
        <dbReference type="ChEBI" id="CHEBI:60344"/>
    </cofactor>
    <text evidence="2">Binds 2 heme b groups non-covalently.</text>
</comment>
<comment type="subunit">
    <text evidence="2">The main subunits of complex b-c1 are: cytochrome b, cytochrome c1 and the Rieske protein.</text>
</comment>
<comment type="subcellular location">
    <subcellularLocation>
        <location evidence="3">Mitochondrion inner membrane</location>
        <topology evidence="3">Multi-pass membrane protein</topology>
    </subcellularLocation>
</comment>
<comment type="miscellaneous">
    <text evidence="1">Heme 1 (or BL or b562) is low-potential and absorbs at about 562 nm, and heme 2 (or BH or b566) is high-potential and absorbs at about 566 nm.</text>
</comment>
<comment type="similarity">
    <text evidence="4 5">Belongs to the cytochrome b family.</text>
</comment>
<comment type="caution">
    <text evidence="2">The full-length protein contains only eight transmembrane helices, not nine as predicted by bioinformatics tools.</text>
</comment>
<dbReference type="EMBL" id="AF442957">
    <property type="protein sequence ID" value="AAL66249.1"/>
    <property type="molecule type" value="Genomic_DNA"/>
</dbReference>
<dbReference type="RefSeq" id="NP_563594.1">
    <property type="nucleotide sequence ID" value="NC_003367.1"/>
</dbReference>
<dbReference type="SMR" id="Q8WBV2"/>
<dbReference type="GO" id="GO:0005743">
    <property type="term" value="C:mitochondrial inner membrane"/>
    <property type="evidence" value="ECO:0007669"/>
    <property type="project" value="UniProtKB-SubCell"/>
</dbReference>
<dbReference type="GO" id="GO:0045275">
    <property type="term" value="C:respiratory chain complex III"/>
    <property type="evidence" value="ECO:0007669"/>
    <property type="project" value="InterPro"/>
</dbReference>
<dbReference type="GO" id="GO:0046872">
    <property type="term" value="F:metal ion binding"/>
    <property type="evidence" value="ECO:0007669"/>
    <property type="project" value="UniProtKB-KW"/>
</dbReference>
<dbReference type="GO" id="GO:0008121">
    <property type="term" value="F:ubiquinol-cytochrome-c reductase activity"/>
    <property type="evidence" value="ECO:0007669"/>
    <property type="project" value="InterPro"/>
</dbReference>
<dbReference type="GO" id="GO:0006122">
    <property type="term" value="P:mitochondrial electron transport, ubiquinol to cytochrome c"/>
    <property type="evidence" value="ECO:0007669"/>
    <property type="project" value="TreeGrafter"/>
</dbReference>
<dbReference type="CDD" id="cd00290">
    <property type="entry name" value="cytochrome_b_C"/>
    <property type="match status" value="1"/>
</dbReference>
<dbReference type="CDD" id="cd00284">
    <property type="entry name" value="Cytochrome_b_N"/>
    <property type="match status" value="1"/>
</dbReference>
<dbReference type="FunFam" id="1.20.810.10:FF:000002">
    <property type="entry name" value="Cytochrome b"/>
    <property type="match status" value="1"/>
</dbReference>
<dbReference type="Gene3D" id="1.20.810.10">
    <property type="entry name" value="Cytochrome Bc1 Complex, Chain C"/>
    <property type="match status" value="1"/>
</dbReference>
<dbReference type="InterPro" id="IPR005798">
    <property type="entry name" value="Cyt_b/b6_C"/>
</dbReference>
<dbReference type="InterPro" id="IPR036150">
    <property type="entry name" value="Cyt_b/b6_C_sf"/>
</dbReference>
<dbReference type="InterPro" id="IPR005797">
    <property type="entry name" value="Cyt_b/b6_N"/>
</dbReference>
<dbReference type="InterPro" id="IPR027387">
    <property type="entry name" value="Cytb/b6-like_sf"/>
</dbReference>
<dbReference type="InterPro" id="IPR030689">
    <property type="entry name" value="Cytochrome_b"/>
</dbReference>
<dbReference type="InterPro" id="IPR048260">
    <property type="entry name" value="Cytochrome_b_C_euk/bac"/>
</dbReference>
<dbReference type="InterPro" id="IPR048259">
    <property type="entry name" value="Cytochrome_b_N_euk/bac"/>
</dbReference>
<dbReference type="InterPro" id="IPR016174">
    <property type="entry name" value="Di-haem_cyt_TM"/>
</dbReference>
<dbReference type="PANTHER" id="PTHR19271">
    <property type="entry name" value="CYTOCHROME B"/>
    <property type="match status" value="1"/>
</dbReference>
<dbReference type="PANTHER" id="PTHR19271:SF16">
    <property type="entry name" value="CYTOCHROME B"/>
    <property type="match status" value="1"/>
</dbReference>
<dbReference type="Pfam" id="PF00032">
    <property type="entry name" value="Cytochrom_B_C"/>
    <property type="match status" value="1"/>
</dbReference>
<dbReference type="Pfam" id="PF00033">
    <property type="entry name" value="Cytochrome_B"/>
    <property type="match status" value="1"/>
</dbReference>
<dbReference type="PIRSF" id="PIRSF038885">
    <property type="entry name" value="COB"/>
    <property type="match status" value="1"/>
</dbReference>
<dbReference type="SUPFAM" id="SSF81648">
    <property type="entry name" value="a domain/subunit of cytochrome bc1 complex (Ubiquinol-cytochrome c reductase)"/>
    <property type="match status" value="1"/>
</dbReference>
<dbReference type="SUPFAM" id="SSF81342">
    <property type="entry name" value="Transmembrane di-heme cytochromes"/>
    <property type="match status" value="1"/>
</dbReference>
<dbReference type="PROSITE" id="PS51003">
    <property type="entry name" value="CYTB_CTER"/>
    <property type="match status" value="1"/>
</dbReference>
<dbReference type="PROSITE" id="PS51002">
    <property type="entry name" value="CYTB_NTER"/>
    <property type="match status" value="1"/>
</dbReference>
<geneLocation type="mitochondrion"/>
<evidence type="ECO:0000250" key="1"/>
<evidence type="ECO:0000250" key="2">
    <source>
        <dbReference type="UniProtKB" id="P00157"/>
    </source>
</evidence>
<evidence type="ECO:0000250" key="3">
    <source>
        <dbReference type="UniProtKB" id="P00163"/>
    </source>
</evidence>
<evidence type="ECO:0000255" key="4">
    <source>
        <dbReference type="PROSITE-ProRule" id="PRU00967"/>
    </source>
</evidence>
<evidence type="ECO:0000255" key="5">
    <source>
        <dbReference type="PROSITE-ProRule" id="PRU00968"/>
    </source>
</evidence>
<sequence>MNIYKPIRKTHPIFKIINGSLIDLPTPSNISSLWNFGSLLAMCLIIQIITGLFLTMYYTANIELAFYSVNYICRNVNYGWLIRTLHANGASFFFICIYIHIGRGIYYESFNLKYTWMVGVIILFLLMATAFMGYVLPWGQMSFWGATVITNLLSAIPYLGTMLVNWIWGGFAIDNATLTRFYTFHFILPFIILMMTMIHLLFLHQTGSNNPLGINSNLDKIPFHPFFTFKDMIGFIIISFLLIFLTLTNPYLLGDPDNFTPANPLVTPIHIQPEWYFLFAYAILRSIPNKLGGVIALIMSILILIILPLTFFKKIQGIQFYPMNQILFWIMVVTIILLTWIGARPVEDPYVFVGQVLTIMYFSYYIINPMISIYWDKLIFN</sequence>
<reference key="1">
    <citation type="submission" date="2001-11" db="EMBL/GenBank/DDBJ databases">
        <title>Near complete mitochondrial DNA sequence from Ostrinia nubilalis.</title>
        <authorList>
            <person name="Coates B.S."/>
            <person name="Hellmich R.L."/>
        </authorList>
    </citation>
    <scope>NUCLEOTIDE SEQUENCE [GENOMIC DNA]</scope>
    <source>
        <strain>Bivoltine Z</strain>
    </source>
</reference>
<name>CYB_OSTNU</name>
<keyword id="KW-0249">Electron transport</keyword>
<keyword id="KW-0349">Heme</keyword>
<keyword id="KW-0408">Iron</keyword>
<keyword id="KW-0472">Membrane</keyword>
<keyword id="KW-0479">Metal-binding</keyword>
<keyword id="KW-0496">Mitochondrion</keyword>
<keyword id="KW-0999">Mitochondrion inner membrane</keyword>
<keyword id="KW-0679">Respiratory chain</keyword>
<keyword id="KW-0812">Transmembrane</keyword>
<keyword id="KW-1133">Transmembrane helix</keyword>
<keyword id="KW-0813">Transport</keyword>
<keyword id="KW-0830">Ubiquinone</keyword>